<evidence type="ECO:0000250" key="1"/>
<evidence type="ECO:0000255" key="2">
    <source>
        <dbReference type="PROSITE-ProRule" id="PRU00047"/>
    </source>
</evidence>
<evidence type="ECO:0000256" key="3">
    <source>
        <dbReference type="SAM" id="MobiDB-lite"/>
    </source>
</evidence>
<evidence type="ECO:0000305" key="4"/>
<comment type="function">
    <text evidence="1">Possible splicing regulator involved in the control of cellular survival.</text>
</comment>
<comment type="sequence caution" evidence="4">
    <conflict type="frameshift">
        <sequence resource="EMBL-CDS" id="AAI35676"/>
    </conflict>
</comment>
<proteinExistence type="evidence at transcript level"/>
<name>SR1IP_XENTR</name>
<reference key="1">
    <citation type="submission" date="2006-10" db="EMBL/GenBank/DDBJ databases">
        <authorList>
            <consortium name="Sanger Xenopus tropicalis EST/cDNA project"/>
        </authorList>
    </citation>
    <scope>NUCLEOTIDE SEQUENCE [LARGE SCALE MRNA]</scope>
    <source>
        <tissue>Neurula</tissue>
    </source>
</reference>
<reference key="2">
    <citation type="submission" date="2007-03" db="EMBL/GenBank/DDBJ databases">
        <authorList>
            <consortium name="NIH - Xenopus Gene Collection (XGC) project"/>
        </authorList>
    </citation>
    <scope>NUCLEOTIDE SEQUENCE [LARGE SCALE MRNA]</scope>
    <source>
        <tissue>Embryo</tissue>
    </source>
</reference>
<feature type="chain" id="PRO_0000311926" description="Protein SREK1IP1">
    <location>
        <begin position="1"/>
        <end position="155"/>
    </location>
</feature>
<feature type="zinc finger region" description="CCHC-type" evidence="2">
    <location>
        <begin position="13"/>
        <end position="30"/>
    </location>
</feature>
<feature type="region of interest" description="Disordered" evidence="3">
    <location>
        <begin position="43"/>
        <end position="155"/>
    </location>
</feature>
<feature type="compositionally biased region" description="Basic and acidic residues" evidence="3">
    <location>
        <begin position="58"/>
        <end position="74"/>
    </location>
</feature>
<feature type="compositionally biased region" description="Basic residues" evidence="3">
    <location>
        <begin position="75"/>
        <end position="93"/>
    </location>
</feature>
<feature type="compositionally biased region" description="Basic and acidic residues" evidence="3">
    <location>
        <begin position="94"/>
        <end position="103"/>
    </location>
</feature>
<feature type="compositionally biased region" description="Basic residues" evidence="3">
    <location>
        <begin position="104"/>
        <end position="137"/>
    </location>
</feature>
<feature type="compositionally biased region" description="Low complexity" evidence="3">
    <location>
        <begin position="140"/>
        <end position="155"/>
    </location>
</feature>
<sequence>MAVPGVNKDNIRAGCKKCGYPGHLTFECRNFLRVDPQRDIVLDVSSTSTEDSEDESEEVARAPADKKNVTDTGKKKLKRKKEKKLKKHRKRLHSSSESDDNSKAKKRKSQKKEKRVKHKAKKGKQHKKDKRKEKRERKSSSSSSSSSSSQSSSSD</sequence>
<keyword id="KW-0479">Metal-binding</keyword>
<keyword id="KW-0507">mRNA processing</keyword>
<keyword id="KW-0508">mRNA splicing</keyword>
<keyword id="KW-1185">Reference proteome</keyword>
<keyword id="KW-0862">Zinc</keyword>
<keyword id="KW-0863">Zinc-finger</keyword>
<gene>
    <name type="primary">srek1ip1</name>
    <name type="synonym">sfrs12ip1</name>
    <name type="ORF">TNeu060i09.1</name>
</gene>
<dbReference type="EMBL" id="CR848286">
    <property type="protein sequence ID" value="CAJ82692.1"/>
    <property type="molecule type" value="mRNA"/>
</dbReference>
<dbReference type="EMBL" id="BC135675">
    <property type="protein sequence ID" value="AAI35676.1"/>
    <property type="status" value="ALT_FRAME"/>
    <property type="molecule type" value="mRNA"/>
</dbReference>
<dbReference type="RefSeq" id="NP_001015999.1">
    <property type="nucleotide sequence ID" value="NM_001015999.2"/>
</dbReference>
<dbReference type="STRING" id="8364.ENSXETP00000045465"/>
<dbReference type="PaxDb" id="8364-ENSXETP00000060502"/>
<dbReference type="DNASU" id="548753"/>
<dbReference type="GeneID" id="548753"/>
<dbReference type="KEGG" id="xtr:548753"/>
<dbReference type="AGR" id="Xenbase:XB-GENE-6454409"/>
<dbReference type="CTD" id="285672"/>
<dbReference type="Xenbase" id="XB-GENE-6454409">
    <property type="gene designation" value="srek1ip1"/>
</dbReference>
<dbReference type="eggNOG" id="KOG2985">
    <property type="taxonomic scope" value="Eukaryota"/>
</dbReference>
<dbReference type="HOGENOM" id="CLU_122662_0_0_1"/>
<dbReference type="InParanoid" id="Q28EE8"/>
<dbReference type="OMA" id="KHHKKRQ"/>
<dbReference type="OrthoDB" id="5596742at2759"/>
<dbReference type="PhylomeDB" id="Q28EE8"/>
<dbReference type="TreeFam" id="TF318225"/>
<dbReference type="Proteomes" id="UP000008143">
    <property type="component" value="Chromosome 1"/>
</dbReference>
<dbReference type="Bgee" id="ENSXETG00000036887">
    <property type="expression patterns" value="Expressed in 2-cell stage embryo and 12 other cell types or tissues"/>
</dbReference>
<dbReference type="GO" id="GO:0003676">
    <property type="term" value="F:nucleic acid binding"/>
    <property type="evidence" value="ECO:0007669"/>
    <property type="project" value="InterPro"/>
</dbReference>
<dbReference type="GO" id="GO:0008270">
    <property type="term" value="F:zinc ion binding"/>
    <property type="evidence" value="ECO:0007669"/>
    <property type="project" value="UniProtKB-KW"/>
</dbReference>
<dbReference type="GO" id="GO:0006397">
    <property type="term" value="P:mRNA processing"/>
    <property type="evidence" value="ECO:0007669"/>
    <property type="project" value="UniProtKB-KW"/>
</dbReference>
<dbReference type="GO" id="GO:0008380">
    <property type="term" value="P:RNA splicing"/>
    <property type="evidence" value="ECO:0007669"/>
    <property type="project" value="UniProtKB-KW"/>
</dbReference>
<dbReference type="InterPro" id="IPR001878">
    <property type="entry name" value="Znf_CCHC"/>
</dbReference>
<dbReference type="PANTHER" id="PTHR31437:SF1">
    <property type="entry name" value="PROTEIN SREK1IP1"/>
    <property type="match status" value="1"/>
</dbReference>
<dbReference type="PANTHER" id="PTHR31437">
    <property type="entry name" value="SREK1IP1 FAMILY MEMBER"/>
    <property type="match status" value="1"/>
</dbReference>
<dbReference type="Pfam" id="PF13917">
    <property type="entry name" value="zf-CCHC_3"/>
    <property type="match status" value="1"/>
</dbReference>
<dbReference type="PROSITE" id="PS50158">
    <property type="entry name" value="ZF_CCHC"/>
    <property type="match status" value="1"/>
</dbReference>
<organism>
    <name type="scientific">Xenopus tropicalis</name>
    <name type="common">Western clawed frog</name>
    <name type="synonym">Silurana tropicalis</name>
    <dbReference type="NCBI Taxonomy" id="8364"/>
    <lineage>
        <taxon>Eukaryota</taxon>
        <taxon>Metazoa</taxon>
        <taxon>Chordata</taxon>
        <taxon>Craniata</taxon>
        <taxon>Vertebrata</taxon>
        <taxon>Euteleostomi</taxon>
        <taxon>Amphibia</taxon>
        <taxon>Batrachia</taxon>
        <taxon>Anura</taxon>
        <taxon>Pipoidea</taxon>
        <taxon>Pipidae</taxon>
        <taxon>Xenopodinae</taxon>
        <taxon>Xenopus</taxon>
        <taxon>Silurana</taxon>
    </lineage>
</organism>
<protein>
    <recommendedName>
        <fullName>Protein SREK1IP1</fullName>
    </recommendedName>
</protein>
<accession>Q28EE8</accession>
<accession>A4QNH3</accession>